<dbReference type="EC" id="4.2.1.46" evidence="2"/>
<dbReference type="EMBL" id="L09188">
    <property type="protein sequence ID" value="AAA63157.1"/>
    <property type="molecule type" value="Genomic_DNA"/>
</dbReference>
<dbReference type="EMBL" id="AE002098">
    <property type="protein sequence ID" value="AAF40531.1"/>
    <property type="molecule type" value="Genomic_DNA"/>
</dbReference>
<dbReference type="EMBL" id="AE002098">
    <property type="protein sequence ID" value="AAF40543.1"/>
    <property type="molecule type" value="Genomic_DNA"/>
</dbReference>
<dbReference type="PIR" id="G81242">
    <property type="entry name" value="G81242"/>
</dbReference>
<dbReference type="PIR" id="S42431">
    <property type="entry name" value="S42431"/>
</dbReference>
<dbReference type="RefSeq" id="NP_273127.1">
    <property type="nucleotide sequence ID" value="NC_003112.2"/>
</dbReference>
<dbReference type="RefSeq" id="NP_273142.1">
    <property type="nucleotide sequence ID" value="NC_003112.2"/>
</dbReference>
<dbReference type="SMR" id="P55294"/>
<dbReference type="FunCoup" id="P55294">
    <property type="interactions" value="347"/>
</dbReference>
<dbReference type="STRING" id="122586.NMB0063"/>
<dbReference type="PaxDb" id="122586-NMB0063"/>
<dbReference type="KEGG" id="nme:NMB0063"/>
<dbReference type="KEGG" id="nme:NMB0079"/>
<dbReference type="PATRIC" id="fig|122586.8.peg.114"/>
<dbReference type="HOGENOM" id="CLU_007383_1_14_4"/>
<dbReference type="InParanoid" id="P55294"/>
<dbReference type="OrthoDB" id="9803010at2"/>
<dbReference type="UniPathway" id="UPA00124"/>
<dbReference type="UniPathway" id="UPA00281"/>
<dbReference type="Proteomes" id="UP000000425">
    <property type="component" value="Chromosome"/>
</dbReference>
<dbReference type="GO" id="GO:0008460">
    <property type="term" value="F:dTDP-glucose 4,6-dehydratase activity"/>
    <property type="evidence" value="ECO:0000250"/>
    <property type="project" value="UniProtKB"/>
</dbReference>
<dbReference type="GO" id="GO:0019305">
    <property type="term" value="P:dTDP-rhamnose biosynthetic process"/>
    <property type="evidence" value="ECO:0007669"/>
    <property type="project" value="UniProtKB-UniPathway"/>
</dbReference>
<dbReference type="GO" id="GO:0009103">
    <property type="term" value="P:lipopolysaccharide biosynthetic process"/>
    <property type="evidence" value="ECO:0000250"/>
    <property type="project" value="UniProtKB"/>
</dbReference>
<dbReference type="GO" id="GO:0009243">
    <property type="term" value="P:O antigen biosynthetic process"/>
    <property type="evidence" value="ECO:0007669"/>
    <property type="project" value="UniProtKB-UniPathway"/>
</dbReference>
<dbReference type="GO" id="GO:0000271">
    <property type="term" value="P:polysaccharide biosynthetic process"/>
    <property type="evidence" value="ECO:0000250"/>
    <property type="project" value="UniProtKB"/>
</dbReference>
<dbReference type="CDD" id="cd05246">
    <property type="entry name" value="dTDP_GD_SDR_e"/>
    <property type="match status" value="1"/>
</dbReference>
<dbReference type="FunFam" id="3.40.50.720:FF:000108">
    <property type="entry name" value="dTDP-glucose 4,6-dehydratase"/>
    <property type="match status" value="1"/>
</dbReference>
<dbReference type="Gene3D" id="3.40.50.720">
    <property type="entry name" value="NAD(P)-binding Rossmann-like Domain"/>
    <property type="match status" value="1"/>
</dbReference>
<dbReference type="Gene3D" id="3.90.25.10">
    <property type="entry name" value="UDP-galactose 4-epimerase, domain 1"/>
    <property type="match status" value="1"/>
</dbReference>
<dbReference type="InterPro" id="IPR005888">
    <property type="entry name" value="dTDP_Gluc_deHydtase"/>
</dbReference>
<dbReference type="InterPro" id="IPR016040">
    <property type="entry name" value="NAD(P)-bd_dom"/>
</dbReference>
<dbReference type="InterPro" id="IPR036291">
    <property type="entry name" value="NAD(P)-bd_dom_sf"/>
</dbReference>
<dbReference type="NCBIfam" id="TIGR01181">
    <property type="entry name" value="dTDP_gluc_dehyt"/>
    <property type="match status" value="1"/>
</dbReference>
<dbReference type="PANTHER" id="PTHR43000">
    <property type="entry name" value="DTDP-D-GLUCOSE 4,6-DEHYDRATASE-RELATED"/>
    <property type="match status" value="1"/>
</dbReference>
<dbReference type="Pfam" id="PF16363">
    <property type="entry name" value="GDP_Man_Dehyd"/>
    <property type="match status" value="1"/>
</dbReference>
<dbReference type="SUPFAM" id="SSF51735">
    <property type="entry name" value="NAD(P)-binding Rossmann-fold domains"/>
    <property type="match status" value="1"/>
</dbReference>
<feature type="chain" id="PRO_0000183242" description="dTDP-glucose 4,6-dehydratase">
    <location>
        <begin position="1"/>
        <end position="355"/>
    </location>
</feature>
<feature type="active site" description="Proton donor" evidence="2">
    <location>
        <position position="135"/>
    </location>
</feature>
<feature type="active site" description="Proton acceptor" evidence="2">
    <location>
        <position position="136"/>
    </location>
</feature>
<feature type="active site" description="Proton acceptor" evidence="2">
    <location>
        <position position="160"/>
    </location>
</feature>
<feature type="binding site" evidence="2">
    <location>
        <begin position="12"/>
        <end position="13"/>
    </location>
    <ligand>
        <name>NAD(+)</name>
        <dbReference type="ChEBI" id="CHEBI:57540"/>
    </ligand>
</feature>
<feature type="binding site" evidence="2">
    <location>
        <begin position="33"/>
        <end position="36"/>
    </location>
    <ligand>
        <name>NAD(+)</name>
        <dbReference type="ChEBI" id="CHEBI:57540"/>
    </ligand>
</feature>
<feature type="binding site" evidence="2">
    <location>
        <begin position="59"/>
        <end position="60"/>
    </location>
    <ligand>
        <name>NAD(+)</name>
        <dbReference type="ChEBI" id="CHEBI:57540"/>
    </ligand>
</feature>
<feature type="binding site" evidence="2">
    <location>
        <begin position="81"/>
        <end position="85"/>
    </location>
    <ligand>
        <name>NAD(+)</name>
        <dbReference type="ChEBI" id="CHEBI:57540"/>
    </ligand>
</feature>
<feature type="binding site" evidence="1">
    <location>
        <position position="85"/>
    </location>
    <ligand>
        <name>substrate</name>
    </ligand>
</feature>
<feature type="binding site" evidence="2">
    <location>
        <position position="100"/>
    </location>
    <ligand>
        <name>NAD(+)</name>
        <dbReference type="ChEBI" id="CHEBI:57540"/>
    </ligand>
</feature>
<feature type="binding site" evidence="1">
    <location>
        <position position="134"/>
    </location>
    <ligand>
        <name>substrate</name>
    </ligand>
</feature>
<feature type="binding site" evidence="2">
    <location>
        <begin position="160"/>
        <end position="164"/>
    </location>
    <ligand>
        <name>NAD(+)</name>
        <dbReference type="ChEBI" id="CHEBI:57540"/>
    </ligand>
</feature>
<feature type="binding site" evidence="1">
    <location>
        <position position="189"/>
    </location>
    <ligand>
        <name>substrate</name>
    </ligand>
</feature>
<feature type="binding site" evidence="2">
    <location>
        <position position="190"/>
    </location>
    <ligand>
        <name>NAD(+)</name>
        <dbReference type="ChEBI" id="CHEBI:57540"/>
    </ligand>
</feature>
<feature type="binding site" evidence="1">
    <location>
        <begin position="199"/>
        <end position="200"/>
    </location>
    <ligand>
        <name>substrate</name>
    </ligand>
</feature>
<feature type="binding site" evidence="1">
    <location>
        <begin position="215"/>
        <end position="217"/>
    </location>
    <ligand>
        <name>substrate</name>
    </ligand>
</feature>
<feature type="binding site" evidence="1">
    <location>
        <position position="224"/>
    </location>
    <ligand>
        <name>substrate</name>
    </ligand>
</feature>
<feature type="binding site" evidence="1">
    <location>
        <position position="259"/>
    </location>
    <ligand>
        <name>substrate</name>
    </ligand>
</feature>
<feature type="binding site" evidence="1">
    <location>
        <begin position="293"/>
        <end position="297"/>
    </location>
    <ligand>
        <name>substrate</name>
    </ligand>
</feature>
<feature type="sequence conflict" description="In Ref. 1; AAA63157." evidence="4" ref="1">
    <original>MRK</original>
    <variation>MQTANKKT</variation>
    <location>
        <begin position="1"/>
        <end position="3"/>
    </location>
</feature>
<feature type="sequence conflict" description="In Ref. 1; AAA63157." evidence="4" ref="1">
    <original>RDA</original>
    <variation>QDS</variation>
    <location>
        <begin position="26"/>
        <end position="28"/>
    </location>
</feature>
<feature type="sequence conflict" description="In Ref. 1; AAA63157." evidence="4" ref="1">
    <original>V</original>
    <variation>L</variation>
    <location>
        <position position="32"/>
    </location>
</feature>
<feature type="sequence conflict" description="In Ref. 1; AAA63157." evidence="4" ref="1">
    <original>EV</original>
    <variation>DI</variation>
    <location>
        <begin position="46"/>
        <end position="47"/>
    </location>
</feature>
<feature type="sequence conflict" description="In Ref. 1; AAA63157." evidence="4" ref="1">
    <original>Y</original>
    <variation>H</variation>
    <location>
        <position position="73"/>
    </location>
</feature>
<feature type="sequence conflict" description="In Ref. 1; AAA63157." evidence="4" ref="1">
    <original>G</original>
    <variation>H</variation>
    <location>
        <position position="142"/>
    </location>
</feature>
<feature type="sequence conflict" description="In Ref. 1; AAA63157." evidence="4" ref="1">
    <original>A</original>
    <variation>T</variation>
    <location>
        <position position="152"/>
    </location>
</feature>
<feature type="sequence conflict" description="In Ref. 1; AAA63157." evidence="4" ref="1">
    <original>A</original>
    <variation>T</variation>
    <location>
        <position position="268"/>
    </location>
</feature>
<feature type="sequence conflict" description="In Ref. 1; AAA63157." evidence="4" ref="1">
    <original>A</original>
    <variation>V</variation>
    <location>
        <position position="274"/>
    </location>
</feature>
<organism>
    <name type="scientific">Neisseria meningitidis serogroup B (strain ATCC BAA-335 / MC58)</name>
    <dbReference type="NCBI Taxonomy" id="122586"/>
    <lineage>
        <taxon>Bacteria</taxon>
        <taxon>Pseudomonadati</taxon>
        <taxon>Pseudomonadota</taxon>
        <taxon>Betaproteobacteria</taxon>
        <taxon>Neisseriales</taxon>
        <taxon>Neisseriaceae</taxon>
        <taxon>Neisseria</taxon>
    </lineage>
</organism>
<comment type="function">
    <text evidence="2">Catalyzes the dehydration of dTDP-D-glucose to form dTDP-6-deoxy-D-xylo-4-hexulose via a three-step process involving oxidation, dehydration and reduction.</text>
</comment>
<comment type="catalytic activity">
    <reaction evidence="2">
        <text>dTDP-alpha-D-glucose = dTDP-4-dehydro-6-deoxy-alpha-D-glucose + H2O</text>
        <dbReference type="Rhea" id="RHEA:17221"/>
        <dbReference type="ChEBI" id="CHEBI:15377"/>
        <dbReference type="ChEBI" id="CHEBI:57477"/>
        <dbReference type="ChEBI" id="CHEBI:57649"/>
        <dbReference type="EC" id="4.2.1.46"/>
    </reaction>
</comment>
<comment type="cofactor">
    <cofactor evidence="2">
        <name>NAD(+)</name>
        <dbReference type="ChEBI" id="CHEBI:57540"/>
    </cofactor>
    <text evidence="2">Binds 1 NAD(+) per subunit.</text>
</comment>
<comment type="pathway">
    <text evidence="3">Carbohydrate biosynthesis; dTDP-L-rhamnose biosynthesis.</text>
</comment>
<comment type="pathway">
    <text evidence="3">Bacterial outer membrane biogenesis; LPS O-antigen biosynthesis.</text>
</comment>
<comment type="subunit">
    <text evidence="2">Homodimer.</text>
</comment>
<comment type="similarity">
    <text evidence="2">Belongs to the NAD(P)-dependent epimerase/dehydratase family. dTDP-glucose dehydratase subfamily.</text>
</comment>
<gene>
    <name type="primary">rfbB1</name>
    <name type="ordered locus">NMB0063</name>
</gene>
<gene>
    <name type="primary">rfbB2</name>
    <name type="ordered locus">NMB0079</name>
</gene>
<name>RMLB_NEIMB</name>
<reference key="1">
    <citation type="journal article" date="1994" name="Mol. Microbiol.">
        <title>Contribution of genes from the capsule gene complex (cps) to lipooligosaccharide biosynthesis and serum resistance in Neisseria meningitidis.</title>
        <authorList>
            <person name="Hammerschmidt S."/>
            <person name="Birkholz C."/>
            <person name="Zaehringer U."/>
            <person name="Robertson B.D."/>
            <person name="van Putten J.P.M."/>
            <person name="Ebeling O."/>
            <person name="Frosch M."/>
        </authorList>
    </citation>
    <scope>NUCLEOTIDE SEQUENCE [GENOMIC DNA]</scope>
    <source>
        <strain>B1940 / Serogroup B</strain>
    </source>
</reference>
<reference key="2">
    <citation type="journal article" date="2000" name="Science">
        <title>Complete genome sequence of Neisseria meningitidis serogroup B strain MC58.</title>
        <authorList>
            <person name="Tettelin H."/>
            <person name="Saunders N.J."/>
            <person name="Heidelberg J.F."/>
            <person name="Jeffries A.C."/>
            <person name="Nelson K.E."/>
            <person name="Eisen J.A."/>
            <person name="Ketchum K.A."/>
            <person name="Hood D.W."/>
            <person name="Peden J.F."/>
            <person name="Dodson R.J."/>
            <person name="Nelson W.C."/>
            <person name="Gwinn M.L."/>
            <person name="DeBoy R.T."/>
            <person name="Peterson J.D."/>
            <person name="Hickey E.K."/>
            <person name="Haft D.H."/>
            <person name="Salzberg S.L."/>
            <person name="White O."/>
            <person name="Fleischmann R.D."/>
            <person name="Dougherty B.A."/>
            <person name="Mason T.M."/>
            <person name="Ciecko A."/>
            <person name="Parksey D.S."/>
            <person name="Blair E."/>
            <person name="Cittone H."/>
            <person name="Clark E.B."/>
            <person name="Cotton M.D."/>
            <person name="Utterback T.R."/>
            <person name="Khouri H.M."/>
            <person name="Qin H."/>
            <person name="Vamathevan J.J."/>
            <person name="Gill J."/>
            <person name="Scarlato V."/>
            <person name="Masignani V."/>
            <person name="Pizza M."/>
            <person name="Grandi G."/>
            <person name="Sun L."/>
            <person name="Smith H.O."/>
            <person name="Fraser C.M."/>
            <person name="Moxon E.R."/>
            <person name="Rappuoli R."/>
            <person name="Venter J.C."/>
        </authorList>
    </citation>
    <scope>NUCLEOTIDE SEQUENCE [LARGE SCALE GENOMIC DNA]</scope>
    <source>
        <strain>ATCC BAA-335 / MC58</strain>
    </source>
</reference>
<sequence>MRKILVTGGAGFIGSAVVRHIIRNTRDAVVNVDKLTYAGNLESLTEVADNPRYAFEQVDICDRAELDRVFAQYRPDAVMHLAAESHVDRSIGSAGEFIQTNIVGTFNLLEAARAYWQQMPSEQHEAFRFHHISTDEVYGDLGGTDDLFTETAPYAPSSPYSASKASSDHLVRAWLRTYGLPTIVTNCSNNYGPYHFPEKLIPLMILNALDGKPLPVYGDGMQIRDWLFVEDHARALYQVVTEGVVGETYNIGGHNEKANIEVVKTICALLEELAPEKPAGVARYEDLITFVQDRPGHDVRYAVDAAKIRRDLGWLPLETFESGLRKTVQWYLDNKTWWQNVLNGSYRLERLGTGK</sequence>
<accession>P55294</accession>
<accession>Q9JS14</accession>
<keyword id="KW-0448">Lipopolysaccharide biosynthesis</keyword>
<keyword id="KW-0456">Lyase</keyword>
<keyword id="KW-0520">NAD</keyword>
<keyword id="KW-1185">Reference proteome</keyword>
<proteinExistence type="inferred from homology"/>
<evidence type="ECO:0000250" key="1">
    <source>
        <dbReference type="UniProtKB" id="P26391"/>
    </source>
</evidence>
<evidence type="ECO:0000250" key="2">
    <source>
        <dbReference type="UniProtKB" id="P27830"/>
    </source>
</evidence>
<evidence type="ECO:0000250" key="3">
    <source>
        <dbReference type="UniProtKB" id="P37759"/>
    </source>
</evidence>
<evidence type="ECO:0000305" key="4"/>
<protein>
    <recommendedName>
        <fullName evidence="2">dTDP-glucose 4,6-dehydratase</fullName>
        <ecNumber evidence="2">4.2.1.46</ecNumber>
    </recommendedName>
</protein>